<keyword id="KW-0165">Cleavage on pair of basic residues</keyword>
<keyword id="KW-0186">Copper</keyword>
<keyword id="KW-1015">Disulfide bond</keyword>
<keyword id="KW-0272">Extracellular matrix</keyword>
<keyword id="KW-0955">Glaucoma</keyword>
<keyword id="KW-0886">LTQ</keyword>
<keyword id="KW-0479">Metal-binding</keyword>
<keyword id="KW-0560">Oxidoreductase</keyword>
<keyword id="KW-1267">Proteomics identification</keyword>
<keyword id="KW-1185">Reference proteome</keyword>
<keyword id="KW-0964">Secreted</keyword>
<keyword id="KW-0732">Signal</keyword>
<keyword id="KW-0801">TPQ</keyword>
<name>LOXL1_HUMAN</name>
<feature type="signal peptide" evidence="5">
    <location>
        <begin position="1"/>
        <end position="25"/>
    </location>
</feature>
<feature type="propeptide" id="PRO_0000018528" evidence="4">
    <location>
        <begin position="26"/>
        <end position="95"/>
    </location>
</feature>
<feature type="chain" id="PRO_0000018529" description="Lysyl oxidase homolog 1">
    <location>
        <begin position="96"/>
        <end position="574"/>
    </location>
</feature>
<feature type="region of interest" description="Disordered" evidence="6">
    <location>
        <begin position="62"/>
        <end position="123"/>
    </location>
</feature>
<feature type="region of interest" description="Disordered" evidence="6">
    <location>
        <begin position="239"/>
        <end position="374"/>
    </location>
</feature>
<feature type="region of interest" description="Interaction with FBLN5" evidence="3">
    <location>
        <begin position="311"/>
        <end position="369"/>
    </location>
</feature>
<feature type="region of interest" description="Lysyl-oxidase like">
    <location>
        <begin position="370"/>
        <end position="574"/>
    </location>
</feature>
<feature type="compositionally biased region" description="Basic residues" evidence="6">
    <location>
        <begin position="86"/>
        <end position="96"/>
    </location>
</feature>
<feature type="compositionally biased region" description="Pro residues" evidence="6">
    <location>
        <begin position="255"/>
        <end position="268"/>
    </location>
</feature>
<feature type="compositionally biased region" description="Pro residues" evidence="6">
    <location>
        <begin position="313"/>
        <end position="332"/>
    </location>
</feature>
<feature type="binding site" evidence="5">
    <location>
        <position position="449"/>
    </location>
    <ligand>
        <name>Cu cation</name>
        <dbReference type="ChEBI" id="CHEBI:23378"/>
    </ligand>
</feature>
<feature type="binding site" evidence="5">
    <location>
        <position position="451"/>
    </location>
    <ligand>
        <name>Cu cation</name>
        <dbReference type="ChEBI" id="CHEBI:23378"/>
    </ligand>
</feature>
<feature type="binding site" evidence="5">
    <location>
        <position position="453"/>
    </location>
    <ligand>
        <name>Cu cation</name>
        <dbReference type="ChEBI" id="CHEBI:23378"/>
    </ligand>
</feature>
<feature type="site" description="Cleavage; by furin-like protease" evidence="4">
    <location>
        <begin position="95"/>
        <end position="96"/>
    </location>
</feature>
<feature type="site" description="Cleavage; by BMP1" evidence="4">
    <location>
        <begin position="134"/>
        <end position="135"/>
    </location>
</feature>
<feature type="site" description="Cleavage; by BMP1" evidence="13">
    <location>
        <begin position="151"/>
        <end position="152"/>
    </location>
</feature>
<feature type="site" description="Cleavage; by ADAMTS14" evidence="13">
    <location>
        <begin position="216"/>
        <end position="217"/>
    </location>
</feature>
<feature type="site" description="Cleavage; by BMP1" evidence="4">
    <location>
        <begin position="337"/>
        <end position="338"/>
    </location>
</feature>
<feature type="modified residue" description="2',4',5'-topaquinone; alternate" evidence="2">
    <location>
        <position position="512"/>
    </location>
</feature>
<feature type="disulfide bond" evidence="2">
    <location>
        <begin position="395"/>
        <end position="401"/>
    </location>
</feature>
<feature type="disulfide bond" evidence="2">
    <location>
        <begin position="448"/>
        <end position="497"/>
    </location>
</feature>
<feature type="disulfide bond" evidence="2">
    <location>
        <begin position="481"/>
        <end position="487"/>
    </location>
</feature>
<feature type="disulfide bond" evidence="2">
    <location>
        <begin position="508"/>
        <end position="518"/>
    </location>
</feature>
<feature type="disulfide bond" evidence="2">
    <location>
        <begin position="555"/>
        <end position="569"/>
    </location>
</feature>
<feature type="cross-link" description="Lysine tyrosylquinone (Lys-Tyr); alternate" evidence="2">
    <location>
        <begin position="477"/>
        <end position="512"/>
    </location>
</feature>
<feature type="sequence variant" id="VAR_028436" description="Risk factor for XFS; associated in cis with D-153; dbSNP:rs1048661." evidence="9 10 11 14 15 17">
    <original>R</original>
    <variation>L</variation>
    <location>
        <position position="141"/>
    </location>
</feature>
<feature type="sequence variant" id="VAR_022135" description="Risk factor for XFS; associated in cis with L-141; dbSNP:rs3825942." evidence="7 8 9">
    <original>G</original>
    <variation>D</variation>
    <location>
        <position position="153"/>
    </location>
</feature>
<reference key="1">
    <citation type="journal article" date="1993" name="J. Biol. Chem.">
        <title>A novel human cDNA with a predicted protein similar to lysyl oxidase maps to chromosome 15q24-q25.</title>
        <authorList>
            <person name="Kenyon K."/>
            <person name="Modi W.S."/>
            <person name="Contente S."/>
            <person name="Friedman R.M."/>
        </authorList>
    </citation>
    <scope>NUCLEOTIDE SEQUENCE [MRNA]</scope>
    <scope>VARIANT LEU-141</scope>
    <source>
        <tissue>Skin fibroblast</tissue>
    </source>
</reference>
<reference key="2">
    <citation type="submission" date="1995-05" db="EMBL/GenBank/DDBJ databases">
        <title>Structure of the human lysyl oxidase-like gene.</title>
        <authorList>
            <person name="Kenyon K."/>
            <person name="Sathya G."/>
            <person name="Contente S."/>
            <person name="Friedman R.M."/>
        </authorList>
    </citation>
    <scope>NUCLEOTIDE SEQUENCE [GENOMIC DNA]</scope>
    <scope>VARIANT LEU-141</scope>
    <source>
        <tissue>Placenta</tissue>
    </source>
</reference>
<reference key="3">
    <citation type="journal article" date="2004" name="Nat. Genet.">
        <title>Complete sequencing and characterization of 21,243 full-length human cDNAs.</title>
        <authorList>
            <person name="Ota T."/>
            <person name="Suzuki Y."/>
            <person name="Nishikawa T."/>
            <person name="Otsuki T."/>
            <person name="Sugiyama T."/>
            <person name="Irie R."/>
            <person name="Wakamatsu A."/>
            <person name="Hayashi K."/>
            <person name="Sato H."/>
            <person name="Nagai K."/>
            <person name="Kimura K."/>
            <person name="Makita H."/>
            <person name="Sekine M."/>
            <person name="Obayashi M."/>
            <person name="Nishi T."/>
            <person name="Shibahara T."/>
            <person name="Tanaka T."/>
            <person name="Ishii S."/>
            <person name="Yamamoto J."/>
            <person name="Saito K."/>
            <person name="Kawai Y."/>
            <person name="Isono Y."/>
            <person name="Nakamura Y."/>
            <person name="Nagahari K."/>
            <person name="Murakami K."/>
            <person name="Yasuda T."/>
            <person name="Iwayanagi T."/>
            <person name="Wagatsuma M."/>
            <person name="Shiratori A."/>
            <person name="Sudo H."/>
            <person name="Hosoiri T."/>
            <person name="Kaku Y."/>
            <person name="Kodaira H."/>
            <person name="Kondo H."/>
            <person name="Sugawara M."/>
            <person name="Takahashi M."/>
            <person name="Kanda K."/>
            <person name="Yokoi T."/>
            <person name="Furuya T."/>
            <person name="Kikkawa E."/>
            <person name="Omura Y."/>
            <person name="Abe K."/>
            <person name="Kamihara K."/>
            <person name="Katsuta N."/>
            <person name="Sato K."/>
            <person name="Tanikawa M."/>
            <person name="Yamazaki M."/>
            <person name="Ninomiya K."/>
            <person name="Ishibashi T."/>
            <person name="Yamashita H."/>
            <person name="Murakawa K."/>
            <person name="Fujimori K."/>
            <person name="Tanai H."/>
            <person name="Kimata M."/>
            <person name="Watanabe M."/>
            <person name="Hiraoka S."/>
            <person name="Chiba Y."/>
            <person name="Ishida S."/>
            <person name="Ono Y."/>
            <person name="Takiguchi S."/>
            <person name="Watanabe S."/>
            <person name="Yosida M."/>
            <person name="Hotuta T."/>
            <person name="Kusano J."/>
            <person name="Kanehori K."/>
            <person name="Takahashi-Fujii A."/>
            <person name="Hara H."/>
            <person name="Tanase T.-O."/>
            <person name="Nomura Y."/>
            <person name="Togiya S."/>
            <person name="Komai F."/>
            <person name="Hara R."/>
            <person name="Takeuchi K."/>
            <person name="Arita M."/>
            <person name="Imose N."/>
            <person name="Musashino K."/>
            <person name="Yuuki H."/>
            <person name="Oshima A."/>
            <person name="Sasaki N."/>
            <person name="Aotsuka S."/>
            <person name="Yoshikawa Y."/>
            <person name="Matsunawa H."/>
            <person name="Ichihara T."/>
            <person name="Shiohata N."/>
            <person name="Sano S."/>
            <person name="Moriya S."/>
            <person name="Momiyama H."/>
            <person name="Satoh N."/>
            <person name="Takami S."/>
            <person name="Terashima Y."/>
            <person name="Suzuki O."/>
            <person name="Nakagawa S."/>
            <person name="Senoh A."/>
            <person name="Mizoguchi H."/>
            <person name="Goto Y."/>
            <person name="Shimizu F."/>
            <person name="Wakebe H."/>
            <person name="Hishigaki H."/>
            <person name="Watanabe T."/>
            <person name="Sugiyama A."/>
            <person name="Takemoto M."/>
            <person name="Kawakami B."/>
            <person name="Yamazaki M."/>
            <person name="Watanabe K."/>
            <person name="Kumagai A."/>
            <person name="Itakura S."/>
            <person name="Fukuzumi Y."/>
            <person name="Fujimori Y."/>
            <person name="Komiyama M."/>
            <person name="Tashiro H."/>
            <person name="Tanigami A."/>
            <person name="Fujiwara T."/>
            <person name="Ono T."/>
            <person name="Yamada K."/>
            <person name="Fujii Y."/>
            <person name="Ozaki K."/>
            <person name="Hirao M."/>
            <person name="Ohmori Y."/>
            <person name="Kawabata A."/>
            <person name="Hikiji T."/>
            <person name="Kobatake N."/>
            <person name="Inagaki H."/>
            <person name="Ikema Y."/>
            <person name="Okamoto S."/>
            <person name="Okitani R."/>
            <person name="Kawakami T."/>
            <person name="Noguchi S."/>
            <person name="Itoh T."/>
            <person name="Shigeta K."/>
            <person name="Senba T."/>
            <person name="Matsumura K."/>
            <person name="Nakajima Y."/>
            <person name="Mizuno T."/>
            <person name="Morinaga M."/>
            <person name="Sasaki M."/>
            <person name="Togashi T."/>
            <person name="Oyama M."/>
            <person name="Hata H."/>
            <person name="Watanabe M."/>
            <person name="Komatsu T."/>
            <person name="Mizushima-Sugano J."/>
            <person name="Satoh T."/>
            <person name="Shirai Y."/>
            <person name="Takahashi Y."/>
            <person name="Nakagawa K."/>
            <person name="Okumura K."/>
            <person name="Nagase T."/>
            <person name="Nomura N."/>
            <person name="Kikuchi H."/>
            <person name="Masuho Y."/>
            <person name="Yamashita R."/>
            <person name="Nakai K."/>
            <person name="Yada T."/>
            <person name="Nakamura Y."/>
            <person name="Ohara O."/>
            <person name="Isogai T."/>
            <person name="Sugano S."/>
        </authorList>
    </citation>
    <scope>NUCLEOTIDE SEQUENCE [LARGE SCALE MRNA]</scope>
    <scope>VARIANT ASP-153</scope>
    <source>
        <tissue>Amygdala</tissue>
    </source>
</reference>
<reference key="4">
    <citation type="journal article" date="2006" name="Nature">
        <title>Analysis of the DNA sequence and duplication history of human chromosome 15.</title>
        <authorList>
            <person name="Zody M.C."/>
            <person name="Garber M."/>
            <person name="Sharpe T."/>
            <person name="Young S.K."/>
            <person name="Rowen L."/>
            <person name="O'Neill K."/>
            <person name="Whittaker C.A."/>
            <person name="Kamal M."/>
            <person name="Chang J.L."/>
            <person name="Cuomo C.A."/>
            <person name="Dewar K."/>
            <person name="FitzGerald M.G."/>
            <person name="Kodira C.D."/>
            <person name="Madan A."/>
            <person name="Qin S."/>
            <person name="Yang X."/>
            <person name="Abbasi N."/>
            <person name="Abouelleil A."/>
            <person name="Arachchi H.M."/>
            <person name="Baradarani L."/>
            <person name="Birditt B."/>
            <person name="Bloom S."/>
            <person name="Bloom T."/>
            <person name="Borowsky M.L."/>
            <person name="Burke J."/>
            <person name="Butler J."/>
            <person name="Cook A."/>
            <person name="DeArellano K."/>
            <person name="DeCaprio D."/>
            <person name="Dorris L. III"/>
            <person name="Dors M."/>
            <person name="Eichler E.E."/>
            <person name="Engels R."/>
            <person name="Fahey J."/>
            <person name="Fleetwood P."/>
            <person name="Friedman C."/>
            <person name="Gearin G."/>
            <person name="Hall J.L."/>
            <person name="Hensley G."/>
            <person name="Johnson E."/>
            <person name="Jones C."/>
            <person name="Kamat A."/>
            <person name="Kaur A."/>
            <person name="Locke D.P."/>
            <person name="Madan A."/>
            <person name="Munson G."/>
            <person name="Jaffe D.B."/>
            <person name="Lui A."/>
            <person name="Macdonald P."/>
            <person name="Mauceli E."/>
            <person name="Naylor J.W."/>
            <person name="Nesbitt R."/>
            <person name="Nicol R."/>
            <person name="O'Leary S.B."/>
            <person name="Ratcliffe A."/>
            <person name="Rounsley S."/>
            <person name="She X."/>
            <person name="Sneddon K.M.B."/>
            <person name="Stewart S."/>
            <person name="Sougnez C."/>
            <person name="Stone S.M."/>
            <person name="Topham K."/>
            <person name="Vincent D."/>
            <person name="Wang S."/>
            <person name="Zimmer A.R."/>
            <person name="Birren B.W."/>
            <person name="Hood L."/>
            <person name="Lander E.S."/>
            <person name="Nusbaum C."/>
        </authorList>
    </citation>
    <scope>NUCLEOTIDE SEQUENCE [LARGE SCALE GENOMIC DNA]</scope>
</reference>
<reference key="5">
    <citation type="journal article" date="2004" name="Genome Res.">
        <title>The status, quality, and expansion of the NIH full-length cDNA project: the Mammalian Gene Collection (MGC).</title>
        <authorList>
            <consortium name="The MGC Project Team"/>
        </authorList>
    </citation>
    <scope>NUCLEOTIDE SEQUENCE [LARGE SCALE MRNA]</scope>
    <scope>VARIANT ASP-153</scope>
    <source>
        <tissue>Lung</tissue>
        <tissue>Placenta</tissue>
    </source>
</reference>
<reference key="6">
    <citation type="journal article" date="2016" name="Matrix Biol.">
        <title>Functional consequence of fibulin-4 missense mutations associated with vascular and skeletal abnormalities and cutis laxa.</title>
        <authorList>
            <person name="Sasaki T."/>
            <person name="Hanisch F.G."/>
            <person name="Deutzmann R."/>
            <person name="Sakai L.Y."/>
            <person name="Sakuma T."/>
            <person name="Miyamoto T."/>
            <person name="Yamamoto T."/>
            <person name="Hannappel E."/>
            <person name="Chu M.L."/>
            <person name="Lanig H."/>
            <person name="von der Mark K."/>
        </authorList>
    </citation>
    <scope>INTERACTION WITH EFEMP2</scope>
</reference>
<reference key="7">
    <citation type="journal article" date="2022" name="Int. J. Mol. Sci.">
        <title>Cleavage of LOXL1 by BMP1 and ADAMTS14 Proteases Suggests a Role for Proteolytic Processing in the Regulation of LOXL1 Function.</title>
        <authorList>
            <person name="Rosell-Garcia T."/>
            <person name="Rivas-Munoz S."/>
            <person name="Colige A."/>
            <person name="Rodriguez-Pascual F."/>
        </authorList>
    </citation>
    <scope>CLEAVAGE BY ADAM17 AND BMP1</scope>
    <scope>SUBCELLULAR LOCATION</scope>
</reference>
<reference key="8">
    <citation type="journal article" date="2007" name="Science">
        <title>Common sequence variants in the LOXL1 gene confer susceptibility to exfoliation glaucoma.</title>
        <authorList>
            <person name="Thorleifsson G."/>
            <person name="Magnusson K.P."/>
            <person name="Sulem P."/>
            <person name="Walters G.B."/>
            <person name="Gudbjartsson D.F."/>
            <person name="Stefansson H."/>
            <person name="Jonsson T."/>
            <person name="Jonasdottir A."/>
            <person name="Jonasdottir A."/>
            <person name="Stefansdottir G."/>
            <person name="Masson G."/>
            <person name="Hardarson G.A."/>
            <person name="Petursson H."/>
            <person name="Arnarsson A."/>
            <person name="Motallebipour M."/>
            <person name="Wallerman O."/>
            <person name="Wadelius C."/>
            <person name="Gulcher J.R."/>
            <person name="Thorsteinsdottir U."/>
            <person name="Kong A."/>
            <person name="Jonasson F."/>
            <person name="Stefansson K."/>
        </authorList>
    </citation>
    <scope>VARIANTS LEU-141 AND ASP-153</scope>
    <scope>INVOLVEMENT IN XFS</scope>
</reference>
<reference key="9">
    <citation type="journal article" date="2008" name="Hum. Mol. Genet.">
        <title>Ancestral LOXL1 variants are associated with pseudoexfoliation in Caucasian Australians but with markedly lower penetrance than in Nordic people.</title>
        <authorList>
            <person name="Hewitt A.W."/>
            <person name="Sharma S."/>
            <person name="Burdon K.P."/>
            <person name="Wang J.J."/>
            <person name="Baird P.N."/>
            <person name="Dimasi D.P."/>
            <person name="Mackey D.A."/>
            <person name="Mitchell P."/>
            <person name="Craig J.E."/>
        </authorList>
    </citation>
    <scope>VARIANTS LEU-141 AND ASP-153</scope>
    <scope>INVOLVEMENT IN XFS</scope>
    <scope>TISSUE SPECIFICITY</scope>
</reference>
<reference key="10">
    <citation type="journal article" date="2008" name="Proc. Natl. Acad. Sci. U.S.A.">
        <title>A quantitative atlas of mitotic phosphorylation.</title>
        <authorList>
            <person name="Dephoure N."/>
            <person name="Zhou C."/>
            <person name="Villen J."/>
            <person name="Beausoleil S.A."/>
            <person name="Bakalarski C.E."/>
            <person name="Elledge S.J."/>
            <person name="Gygi S.P."/>
        </authorList>
    </citation>
    <scope>VARIANT [LARGE SCALE ANALYSIS] LEU-141</scope>
    <scope>IDENTIFICATION BY MASS SPECTROMETRY [LARGE SCALE ANALYSIS]</scope>
    <source>
        <tissue>Cervix carcinoma</tissue>
    </source>
</reference>
<reference key="11">
    <citation type="journal article" date="2009" name="J. Hum. Genet.">
        <title>Association of LOXL1 gene with Finnish exfoliation syndrome patients.</title>
        <authorList>
            <person name="Lemmela S."/>
            <person name="Forsman E."/>
            <person name="Onkamo P."/>
            <person name="Nurmi H."/>
            <person name="Laivuori H."/>
            <person name="Kivela T."/>
            <person name="Puska P."/>
            <person name="Heger M."/>
            <person name="Eriksson A."/>
            <person name="Forsius H."/>
            <person name="Jarvela I."/>
        </authorList>
    </citation>
    <scope>VARIANTS LEU-141 AND ASP-153</scope>
    <scope>INVOLVEMENT IN XFS</scope>
</reference>
<proteinExistence type="evidence at protein level"/>
<comment type="function">
    <text evidence="3">Catalyzes the oxidative deamination of lysine and hydroxylysine residues in collagen and elastin, resulting in the formation of covalent cross-linkages, and the stabilization of collagen and elastin fibers (By similarity). Essential for the elastic fiber homeostasis and for their maintenance at adult age (By similarity).</text>
</comment>
<comment type="catalytic activity">
    <reaction evidence="3">
        <text>L-lysyl-[protein] + O2 + H2O = (S)-2-amino-6-oxohexanoyl-[protein] + H2O2 + NH4(+)</text>
        <dbReference type="Rhea" id="RHEA:24544"/>
        <dbReference type="Rhea" id="RHEA-COMP:9752"/>
        <dbReference type="Rhea" id="RHEA-COMP:12448"/>
        <dbReference type="ChEBI" id="CHEBI:15377"/>
        <dbReference type="ChEBI" id="CHEBI:15379"/>
        <dbReference type="ChEBI" id="CHEBI:16240"/>
        <dbReference type="ChEBI" id="CHEBI:28938"/>
        <dbReference type="ChEBI" id="CHEBI:29969"/>
        <dbReference type="ChEBI" id="CHEBI:131803"/>
        <dbReference type="EC" id="1.4.3.13"/>
    </reaction>
</comment>
<comment type="cofactor">
    <cofactor evidence="1">
        <name>Cu cation</name>
        <dbReference type="ChEBI" id="CHEBI:23378"/>
    </cofactor>
</comment>
<comment type="cofactor">
    <cofactor evidence="2">
        <name>lysine tyrosylquinone residue</name>
        <dbReference type="ChEBI" id="CHEBI:20489"/>
    </cofactor>
    <text evidence="2">Contains 1 lysine tyrosylquinone.</text>
</comment>
<comment type="subunit">
    <text evidence="3 12">Interacts (via propeptide) with EFEMP2 (PubMed:27339457). Interacts with FBLN5 (By similarity).</text>
</comment>
<comment type="subcellular location">
    <subcellularLocation>
        <location evidence="13">Secreted</location>
        <location evidence="13">Extracellular space</location>
    </subcellularLocation>
    <subcellularLocation>
        <location evidence="3">Secreted</location>
        <location evidence="3">Extracellular space</location>
        <location evidence="3">Extracellular matrix</location>
    </subcellularLocation>
</comment>
<comment type="tissue specificity">
    <text evidence="10">Expressed in ocular tissues including the iris, ciliary body, lens and optic nerve. Not detected in the retina.</text>
</comment>
<comment type="PTM">
    <text evidence="2">The lysine tyrosylquinone cross-link (LTQ) is generated by condensation of the epsilon-amino group of a lysine with a topaquinone produced by oxidation of tyrosine.</text>
</comment>
<comment type="PTM">
    <text evidence="4">Proteolytic processing by a furin-like protease causes removal of N-terminal propeptide resulting in an enzyme largely inactive, but further proteolytic processing by BMP1 results in enzyme activation.</text>
</comment>
<comment type="disease" evidence="9 10 11">
    <disease id="DI-02667">
        <name>Exfoliation syndrome</name>
        <acronym>XFS</acronym>
        <description>A disorder characterized by accumulation of abnormal fibrillar deposits in the anterior segment of the eye. In addition to being a cause of glaucoma and glaucomatous optic neuropathy, exfoliation syndrome has also been associated with lens zonule weakness, cataract formation, and systemic vascular complications due to deposition of exfoliation material in extraocular tissues.</description>
        <dbReference type="MIM" id="177650"/>
    </disease>
    <text>Disease susceptibility is associated with variants affecting the gene represented in this entry. Susceptibility to exfoliation syndrome is conferred by a risk haplotype that includes two LOXL1 coding non-synonymous SNPs (Arg141Leu and Gly153Asp) and one intronic SNP. Arg141Leu and Gly153Asp are sufficient to confer disease susceptibility in some populations.</text>
</comment>
<comment type="similarity">
    <text evidence="16">Belongs to the lysyl oxidase family.</text>
</comment>
<dbReference type="EC" id="1.4.3.13" evidence="3"/>
<dbReference type="EMBL" id="L21186">
    <property type="protein sequence ID" value="AAA50162.1"/>
    <property type="molecule type" value="mRNA"/>
</dbReference>
<dbReference type="EMBL" id="U24389">
    <property type="protein sequence ID" value="AAA68940.1"/>
    <property type="molecule type" value="Genomic_DNA"/>
</dbReference>
<dbReference type="EMBL" id="U24395">
    <property type="protein sequence ID" value="AAA68940.1"/>
    <property type="status" value="JOINED"/>
    <property type="molecule type" value="Genomic_DNA"/>
</dbReference>
<dbReference type="EMBL" id="U24394">
    <property type="protein sequence ID" value="AAA68940.1"/>
    <property type="status" value="JOINED"/>
    <property type="molecule type" value="Genomic_DNA"/>
</dbReference>
<dbReference type="EMBL" id="U24393">
    <property type="protein sequence ID" value="AAA68940.1"/>
    <property type="status" value="JOINED"/>
    <property type="molecule type" value="Genomic_DNA"/>
</dbReference>
<dbReference type="EMBL" id="U24391">
    <property type="protein sequence ID" value="AAA68940.1"/>
    <property type="status" value="JOINED"/>
    <property type="molecule type" value="Genomic_DNA"/>
</dbReference>
<dbReference type="EMBL" id="U24390">
    <property type="protein sequence ID" value="AAA68940.1"/>
    <property type="status" value="JOINED"/>
    <property type="molecule type" value="Genomic_DNA"/>
</dbReference>
<dbReference type="EMBL" id="AK314222">
    <property type="protein sequence ID" value="BAG36895.1"/>
    <property type="molecule type" value="mRNA"/>
</dbReference>
<dbReference type="EMBL" id="AC108137">
    <property type="status" value="NOT_ANNOTATED_CDS"/>
    <property type="molecule type" value="Genomic_DNA"/>
</dbReference>
<dbReference type="EMBL" id="BC015090">
    <property type="protein sequence ID" value="AAH15090.1"/>
    <property type="molecule type" value="mRNA"/>
</dbReference>
<dbReference type="EMBL" id="BC068542">
    <property type="protein sequence ID" value="AAH68542.1"/>
    <property type="molecule type" value="mRNA"/>
</dbReference>
<dbReference type="CCDS" id="CCDS10253.1"/>
<dbReference type="PIR" id="A48501">
    <property type="entry name" value="A48501"/>
</dbReference>
<dbReference type="RefSeq" id="NP_005567.2">
    <property type="nucleotide sequence ID" value="NM_005576.4"/>
</dbReference>
<dbReference type="SMR" id="Q08397"/>
<dbReference type="BioGRID" id="110200">
    <property type="interactions" value="16"/>
</dbReference>
<dbReference type="FunCoup" id="Q08397">
    <property type="interactions" value="282"/>
</dbReference>
<dbReference type="IntAct" id="Q08397">
    <property type="interactions" value="15"/>
</dbReference>
<dbReference type="MINT" id="Q08397"/>
<dbReference type="STRING" id="9606.ENSP00000261921"/>
<dbReference type="BindingDB" id="Q08397"/>
<dbReference type="ChEMBL" id="CHEMBL4523279"/>
<dbReference type="GlyCosmos" id="Q08397">
    <property type="glycosylation" value="1 site, 1 glycan"/>
</dbReference>
<dbReference type="GlyGen" id="Q08397">
    <property type="glycosylation" value="1 site, 1 O-linked glycan (1 site)"/>
</dbReference>
<dbReference type="iPTMnet" id="Q08397"/>
<dbReference type="PhosphoSitePlus" id="Q08397"/>
<dbReference type="BioMuta" id="LOXL1"/>
<dbReference type="DMDM" id="189031484"/>
<dbReference type="jPOST" id="Q08397"/>
<dbReference type="MassIVE" id="Q08397"/>
<dbReference type="PaxDb" id="9606-ENSP00000261921"/>
<dbReference type="PeptideAtlas" id="Q08397"/>
<dbReference type="ProteomicsDB" id="58607"/>
<dbReference type="Antibodypedia" id="26814">
    <property type="antibodies" value="270 antibodies from 28 providers"/>
</dbReference>
<dbReference type="DNASU" id="4016"/>
<dbReference type="Ensembl" id="ENST00000261921.8">
    <property type="protein sequence ID" value="ENSP00000261921.7"/>
    <property type="gene ID" value="ENSG00000129038.16"/>
</dbReference>
<dbReference type="GeneID" id="4016"/>
<dbReference type="KEGG" id="hsa:4016"/>
<dbReference type="MANE-Select" id="ENST00000261921.8">
    <property type="protein sequence ID" value="ENSP00000261921.7"/>
    <property type="RefSeq nucleotide sequence ID" value="NM_005576.4"/>
    <property type="RefSeq protein sequence ID" value="NP_005567.2"/>
</dbReference>
<dbReference type="UCSC" id="uc002awc.2">
    <property type="organism name" value="human"/>
</dbReference>
<dbReference type="AGR" id="HGNC:6665"/>
<dbReference type="CTD" id="4016"/>
<dbReference type="DisGeNET" id="4016"/>
<dbReference type="GeneCards" id="LOXL1"/>
<dbReference type="HGNC" id="HGNC:6665">
    <property type="gene designation" value="LOXL1"/>
</dbReference>
<dbReference type="HPA" id="ENSG00000129038">
    <property type="expression patterns" value="Low tissue specificity"/>
</dbReference>
<dbReference type="MalaCards" id="LOXL1"/>
<dbReference type="MIM" id="153456">
    <property type="type" value="gene"/>
</dbReference>
<dbReference type="MIM" id="177650">
    <property type="type" value="phenotype"/>
</dbReference>
<dbReference type="neXtProt" id="NX_Q08397"/>
<dbReference type="OpenTargets" id="ENSG00000129038"/>
<dbReference type="PharmGKB" id="PA30428"/>
<dbReference type="VEuPathDB" id="HostDB:ENSG00000129038"/>
<dbReference type="eggNOG" id="ENOG502QWET">
    <property type="taxonomic scope" value="Eukaryota"/>
</dbReference>
<dbReference type="GeneTree" id="ENSGT00940000161080"/>
<dbReference type="HOGENOM" id="CLU_002555_2_2_1"/>
<dbReference type="InParanoid" id="Q08397"/>
<dbReference type="OMA" id="SATPWRQ"/>
<dbReference type="OrthoDB" id="547291at2759"/>
<dbReference type="PAN-GO" id="Q08397">
    <property type="GO annotations" value="5 GO annotations based on evolutionary models"/>
</dbReference>
<dbReference type="PhylomeDB" id="Q08397"/>
<dbReference type="TreeFam" id="TF326061"/>
<dbReference type="PathwayCommons" id="Q08397"/>
<dbReference type="Reactome" id="R-HSA-1566948">
    <property type="pathway name" value="Elastic fibre formation"/>
</dbReference>
<dbReference type="Reactome" id="R-HSA-2243919">
    <property type="pathway name" value="Crosslinking of collagen fibrils"/>
</dbReference>
<dbReference type="SignaLink" id="Q08397"/>
<dbReference type="BioGRID-ORCS" id="4016">
    <property type="hits" value="12 hits in 1138 CRISPR screens"/>
</dbReference>
<dbReference type="ChiTaRS" id="LOXL1">
    <property type="organism name" value="human"/>
</dbReference>
<dbReference type="GeneWiki" id="LOXL1"/>
<dbReference type="GenomeRNAi" id="4016"/>
<dbReference type="Pharos" id="Q08397">
    <property type="development level" value="Tbio"/>
</dbReference>
<dbReference type="PRO" id="PR:Q08397"/>
<dbReference type="Proteomes" id="UP000005640">
    <property type="component" value="Chromosome 15"/>
</dbReference>
<dbReference type="RNAct" id="Q08397">
    <property type="molecule type" value="protein"/>
</dbReference>
<dbReference type="Bgee" id="ENSG00000129038">
    <property type="expression patterns" value="Expressed in thoracic aorta and 153 other cell types or tissues"/>
</dbReference>
<dbReference type="ExpressionAtlas" id="Q08397">
    <property type="expression patterns" value="baseline and differential"/>
</dbReference>
<dbReference type="GO" id="GO:0001669">
    <property type="term" value="C:acrosomal vesicle"/>
    <property type="evidence" value="ECO:0007669"/>
    <property type="project" value="Ensembl"/>
</dbReference>
<dbReference type="GO" id="GO:0005604">
    <property type="term" value="C:basement membrane"/>
    <property type="evidence" value="ECO:0007669"/>
    <property type="project" value="Ensembl"/>
</dbReference>
<dbReference type="GO" id="GO:0062023">
    <property type="term" value="C:collagen-containing extracellular matrix"/>
    <property type="evidence" value="ECO:0007005"/>
    <property type="project" value="BHF-UCL"/>
</dbReference>
<dbReference type="GO" id="GO:0005576">
    <property type="term" value="C:extracellular region"/>
    <property type="evidence" value="ECO:0000304"/>
    <property type="project" value="UniProtKB"/>
</dbReference>
<dbReference type="GO" id="GO:0005615">
    <property type="term" value="C:extracellular space"/>
    <property type="evidence" value="ECO:0000314"/>
    <property type="project" value="UniProtKB"/>
</dbReference>
<dbReference type="GO" id="GO:0005507">
    <property type="term" value="F:copper ion binding"/>
    <property type="evidence" value="ECO:0007669"/>
    <property type="project" value="InterPro"/>
</dbReference>
<dbReference type="GO" id="GO:0004720">
    <property type="term" value="F:protein-lysine 6-oxidase activity"/>
    <property type="evidence" value="ECO:0000250"/>
    <property type="project" value="UniProtKB"/>
</dbReference>
<dbReference type="GO" id="GO:0035904">
    <property type="term" value="P:aorta development"/>
    <property type="evidence" value="ECO:0007669"/>
    <property type="project" value="Ensembl"/>
</dbReference>
<dbReference type="GO" id="GO:0030199">
    <property type="term" value="P:collagen fibril organization"/>
    <property type="evidence" value="ECO:0000318"/>
    <property type="project" value="GO_Central"/>
</dbReference>
<dbReference type="GO" id="GO:0018277">
    <property type="term" value="P:protein deamination"/>
    <property type="evidence" value="ECO:0000304"/>
    <property type="project" value="UniProtKB"/>
</dbReference>
<dbReference type="GO" id="GO:0032496">
    <property type="term" value="P:response to lipopolysaccharide"/>
    <property type="evidence" value="ECO:0007669"/>
    <property type="project" value="Ensembl"/>
</dbReference>
<dbReference type="InterPro" id="IPR050912">
    <property type="entry name" value="LOX-like_protein"/>
</dbReference>
<dbReference type="InterPro" id="IPR001695">
    <property type="entry name" value="Lysyl_oxidase"/>
</dbReference>
<dbReference type="InterPro" id="IPR019828">
    <property type="entry name" value="Lysyl_oxidase_CS"/>
</dbReference>
<dbReference type="PANTHER" id="PTHR45817:SF8">
    <property type="entry name" value="LYSYL OXIDASE HOMOLOG 1"/>
    <property type="match status" value="1"/>
</dbReference>
<dbReference type="PANTHER" id="PTHR45817">
    <property type="entry name" value="LYSYL OXIDASE-LIKE-RELATED"/>
    <property type="match status" value="1"/>
</dbReference>
<dbReference type="Pfam" id="PF01186">
    <property type="entry name" value="Lysyl_oxidase"/>
    <property type="match status" value="1"/>
</dbReference>
<dbReference type="PRINTS" id="PR00074">
    <property type="entry name" value="LYSYLOXIDASE"/>
</dbReference>
<dbReference type="PROSITE" id="PS00926">
    <property type="entry name" value="LYSYL_OXIDASE"/>
    <property type="match status" value="1"/>
</dbReference>
<protein>
    <recommendedName>
        <fullName>Lysyl oxidase homolog 1</fullName>
        <ecNumber evidence="3">1.4.3.13</ecNumber>
    </recommendedName>
    <alternativeName>
        <fullName>Lysyl oxidase-like protein 1</fullName>
        <shortName>LOL</shortName>
    </alternativeName>
</protein>
<evidence type="ECO:0000250" key="1">
    <source>
        <dbReference type="UniProtKB" id="P16636"/>
    </source>
</evidence>
<evidence type="ECO:0000250" key="2">
    <source>
        <dbReference type="UniProtKB" id="P33072"/>
    </source>
</evidence>
<evidence type="ECO:0000250" key="3">
    <source>
        <dbReference type="UniProtKB" id="P97873"/>
    </source>
</evidence>
<evidence type="ECO:0000250" key="4">
    <source>
        <dbReference type="UniProtKB" id="Q95L39"/>
    </source>
</evidence>
<evidence type="ECO:0000255" key="5"/>
<evidence type="ECO:0000256" key="6">
    <source>
        <dbReference type="SAM" id="MobiDB-lite"/>
    </source>
</evidence>
<evidence type="ECO:0000269" key="7">
    <source>
    </source>
</evidence>
<evidence type="ECO:0000269" key="8">
    <source>
    </source>
</evidence>
<evidence type="ECO:0000269" key="9">
    <source>
    </source>
</evidence>
<evidence type="ECO:0000269" key="10">
    <source>
    </source>
</evidence>
<evidence type="ECO:0000269" key="11">
    <source>
    </source>
</evidence>
<evidence type="ECO:0000269" key="12">
    <source>
    </source>
</evidence>
<evidence type="ECO:0000269" key="13">
    <source>
    </source>
</evidence>
<evidence type="ECO:0000269" key="14">
    <source>
    </source>
</evidence>
<evidence type="ECO:0000269" key="15">
    <source ref="2"/>
</evidence>
<evidence type="ECO:0000305" key="16"/>
<evidence type="ECO:0007744" key="17">
    <source>
    </source>
</evidence>
<accession>Q08397</accession>
<accession>Q6NUL3</accession>
<accession>Q96BW7</accession>
<sequence length="574" mass="63110">MALARGSRQLGALVWGACLCVLVHGQQAQPGQGSDPARWRQLIQWENNGQVYSLLNSGSEYVPAGPQRSESSSRVLLAGAPQAQQRRSHGSPRRRQAPSLPLPGRVGSDTVRGQARHPFGFGQVPDNWREVAVGDSTGMARARTSVSQQRHGGSASSVSASAFASTYRQQPSYPQQFPYPQAPFVSQYENYDPASRTYDQGFVYYRPAGGGVGAGAAAVASAGVIYPYQPRARYEEYGGGEELPEYPPQGFYPAPERPYVPPPPPPPDGLDRRYSHSLYSEGTPGFEQAYPDPGPEAAQAHGGDPRLGWYPPYANPPPEAYGPPRALEPPYLPVRSSDTPPPGGERNGAQQGRLSVGSVYRPNQNGRGLPDLVPDPNYVQASTYVQRAHLYSLRCAAEEKCLASTAYAPEATDYDVRVLLRFPQRVKNQGTADFLPNRPRHTWEWHSCHQHYHSMDEFSHYDLLDAATGKKVAEGHKASFCLEDSTCDFGNLKRYACTSHTQGLSPGCYDTYNADIDCQWIDITDVQPGNYILKVHVNPKYIVLESDFTNNVVRCNIHYTGRYVSATNCKIVQS</sequence>
<gene>
    <name type="primary">LOXL1</name>
    <name type="synonym">LOXL</name>
</gene>
<organism>
    <name type="scientific">Homo sapiens</name>
    <name type="common">Human</name>
    <dbReference type="NCBI Taxonomy" id="9606"/>
    <lineage>
        <taxon>Eukaryota</taxon>
        <taxon>Metazoa</taxon>
        <taxon>Chordata</taxon>
        <taxon>Craniata</taxon>
        <taxon>Vertebrata</taxon>
        <taxon>Euteleostomi</taxon>
        <taxon>Mammalia</taxon>
        <taxon>Eutheria</taxon>
        <taxon>Euarchontoglires</taxon>
        <taxon>Primates</taxon>
        <taxon>Haplorrhini</taxon>
        <taxon>Catarrhini</taxon>
        <taxon>Hominidae</taxon>
        <taxon>Homo</taxon>
    </lineage>
</organism>